<sequence length="1316" mass="146762">MLDVNFFDELRIGLATAEDIRQWSYGEVKKPETINYRTLKPEKDGLFCEKIFGPTRDWECYCGKYKRVRFKGIICERCGVEVTRAKVRRERMGHIELAAPVTHIWYFKGVPSRLGYLLDLAPKDLEKIIYFAAYVITSVDNEMRHNELSTLEAEMMVERKAVEDQRDADLEARAQKLEADLAELEAEGAKADARRKVRDSGEREMRQLRDRAQRELDRLEDIWSTFTKLAPKQLIVDENLYRELQDRYGEYFTGAMGAESIQKLIETFDIDAEAEILRDVIRNGKGQKKLRALKRLKVVAAFQQSGNSPMGMVLDAVPVIPPELRPMVQLDGGRFATSDLNDLYRRVINRNNRLKRLIDLGAPEIIVNNEKRMLQESVDALFDNGRRGRPVTGPGNRPLKSLSDLLKGKQGRFRQNLLGKRVDYSGRSVIVVGPQLKLHQCGLPKLMALELFKPFVMKRLVDLNHAQNIKSAKRMVERQRPQVWDVLEEVIAEHPVLLNRAPTLHRLGIQAFEPMLVEGKAIQLHPLVCEAFNADFDGDQMAVHLPLSAEAQAEARILMLSSNNILSPASGRPLAMPRLDMVTGLYYLTTEVEGDKGAYQPAGQDSPETGVYSSPAEAIMAADRGVLSVRAKIKVRLTQLRPPAEIEDALFGHNGWQPGDAWTAETTLGRVLFNELLPLGYAFVNKQMHKKVQAAIINDLAERYPMIVVAQTVDKLKDSGFYWATRSGVTVSMADVLVPPRKKEILDSYEERAEKVEKQFQRGALNHDERNEALVEIWKEATDEVGQALREHYPADNPIITIVDSGATGNFTQTRTLAGMKGLVTNPKGEFIPRPIKSSFREGLTVLEYFINTHGARKGLADTALRTADSGYLTRRLVDVSQDVIVREHDCQTERGIMVELAERQGDGTLIRDPYIETSAYARTLGADAVDEAGNVVVARGEDLGDPEIEACLAAGITQVKVRSVLTCTTGTGVCATCYGRSMATGKLVDIGEAVGIVAAQSIGEPGTQLTMRTFHQGGVGEDITGGLPRVQELFEARVPRGKAPIADVTGRVRLEDGERFYKITIVPDDGGEEVVYDKLSKRQRLRVFKHEDGSERVLSDGDHVEVGQQLMEGSADPHEVLRVQGPREVQIHLVREVQEVYRAQGVSIHDKHIEVIVRQMLRRVTIIDSGATEFLPGSLIDRAEFEAENRRVVAESGEPAAGRPVLMGITKASLATDSWLSAASFQETTRVLTDAAINCRSDKLNGLKENVIIGKLIPAGTGINRYRNIAVQPTEEARAAAYTIPSYEDQYYSPDFGQATGAAVPLDDYGYSDYR</sequence>
<accession>B2HSJ4</accession>
<evidence type="ECO:0000255" key="1">
    <source>
        <dbReference type="HAMAP-Rule" id="MF_01322"/>
    </source>
</evidence>
<proteinExistence type="inferred from homology"/>
<name>RPOC_MYCMM</name>
<keyword id="KW-0240">DNA-directed RNA polymerase</keyword>
<keyword id="KW-0460">Magnesium</keyword>
<keyword id="KW-0479">Metal-binding</keyword>
<keyword id="KW-0548">Nucleotidyltransferase</keyword>
<keyword id="KW-1185">Reference proteome</keyword>
<keyword id="KW-0804">Transcription</keyword>
<keyword id="KW-0808">Transferase</keyword>
<keyword id="KW-0862">Zinc</keyword>
<organism>
    <name type="scientific">Mycobacterium marinum (strain ATCC BAA-535 / M)</name>
    <dbReference type="NCBI Taxonomy" id="216594"/>
    <lineage>
        <taxon>Bacteria</taxon>
        <taxon>Bacillati</taxon>
        <taxon>Actinomycetota</taxon>
        <taxon>Actinomycetes</taxon>
        <taxon>Mycobacteriales</taxon>
        <taxon>Mycobacteriaceae</taxon>
        <taxon>Mycobacterium</taxon>
        <taxon>Mycobacterium ulcerans group</taxon>
    </lineage>
</organism>
<protein>
    <recommendedName>
        <fullName evidence="1">DNA-directed RNA polymerase subunit beta'</fullName>
        <shortName evidence="1">RNAP subunit beta'</shortName>
        <ecNumber evidence="1">2.7.7.6</ecNumber>
    </recommendedName>
    <alternativeName>
        <fullName evidence="1">RNA polymerase subunit beta'</fullName>
    </alternativeName>
    <alternativeName>
        <fullName evidence="1">Transcriptase subunit beta'</fullName>
    </alternativeName>
</protein>
<feature type="chain" id="PRO_1000141785" description="DNA-directed RNA polymerase subunit beta'">
    <location>
        <begin position="1"/>
        <end position="1316"/>
    </location>
</feature>
<feature type="binding site" evidence="1">
    <location>
        <position position="60"/>
    </location>
    <ligand>
        <name>Zn(2+)</name>
        <dbReference type="ChEBI" id="CHEBI:29105"/>
        <label>1</label>
    </ligand>
</feature>
<feature type="binding site" evidence="1">
    <location>
        <position position="62"/>
    </location>
    <ligand>
        <name>Zn(2+)</name>
        <dbReference type="ChEBI" id="CHEBI:29105"/>
        <label>1</label>
    </ligand>
</feature>
<feature type="binding site" evidence="1">
    <location>
        <position position="75"/>
    </location>
    <ligand>
        <name>Zn(2+)</name>
        <dbReference type="ChEBI" id="CHEBI:29105"/>
        <label>1</label>
    </ligand>
</feature>
<feature type="binding site" evidence="1">
    <location>
        <position position="78"/>
    </location>
    <ligand>
        <name>Zn(2+)</name>
        <dbReference type="ChEBI" id="CHEBI:29105"/>
        <label>1</label>
    </ligand>
</feature>
<feature type="binding site" evidence="1">
    <location>
        <position position="535"/>
    </location>
    <ligand>
        <name>Mg(2+)</name>
        <dbReference type="ChEBI" id="CHEBI:18420"/>
    </ligand>
</feature>
<feature type="binding site" evidence="1">
    <location>
        <position position="537"/>
    </location>
    <ligand>
        <name>Mg(2+)</name>
        <dbReference type="ChEBI" id="CHEBI:18420"/>
    </ligand>
</feature>
<feature type="binding site" evidence="1">
    <location>
        <position position="539"/>
    </location>
    <ligand>
        <name>Mg(2+)</name>
        <dbReference type="ChEBI" id="CHEBI:18420"/>
    </ligand>
</feature>
<feature type="binding site" evidence="1">
    <location>
        <position position="891"/>
    </location>
    <ligand>
        <name>Zn(2+)</name>
        <dbReference type="ChEBI" id="CHEBI:29105"/>
        <label>2</label>
    </ligand>
</feature>
<feature type="binding site" evidence="1">
    <location>
        <position position="968"/>
    </location>
    <ligand>
        <name>Zn(2+)</name>
        <dbReference type="ChEBI" id="CHEBI:29105"/>
        <label>2</label>
    </ligand>
</feature>
<feature type="binding site" evidence="1">
    <location>
        <position position="975"/>
    </location>
    <ligand>
        <name>Zn(2+)</name>
        <dbReference type="ChEBI" id="CHEBI:29105"/>
        <label>2</label>
    </ligand>
</feature>
<feature type="binding site" evidence="1">
    <location>
        <position position="978"/>
    </location>
    <ligand>
        <name>Zn(2+)</name>
        <dbReference type="ChEBI" id="CHEBI:29105"/>
        <label>2</label>
    </ligand>
</feature>
<comment type="function">
    <text evidence="1">DNA-dependent RNA polymerase catalyzes the transcription of DNA into RNA using the four ribonucleoside triphosphates as substrates.</text>
</comment>
<comment type="catalytic activity">
    <reaction evidence="1">
        <text>RNA(n) + a ribonucleoside 5'-triphosphate = RNA(n+1) + diphosphate</text>
        <dbReference type="Rhea" id="RHEA:21248"/>
        <dbReference type="Rhea" id="RHEA-COMP:14527"/>
        <dbReference type="Rhea" id="RHEA-COMP:17342"/>
        <dbReference type="ChEBI" id="CHEBI:33019"/>
        <dbReference type="ChEBI" id="CHEBI:61557"/>
        <dbReference type="ChEBI" id="CHEBI:140395"/>
        <dbReference type="EC" id="2.7.7.6"/>
    </reaction>
</comment>
<comment type="cofactor">
    <cofactor evidence="1">
        <name>Mg(2+)</name>
        <dbReference type="ChEBI" id="CHEBI:18420"/>
    </cofactor>
    <text evidence="1">Binds 1 Mg(2+) ion per subunit.</text>
</comment>
<comment type="cofactor">
    <cofactor evidence="1">
        <name>Zn(2+)</name>
        <dbReference type="ChEBI" id="CHEBI:29105"/>
    </cofactor>
    <text evidence="1">Binds 2 Zn(2+) ions per subunit.</text>
</comment>
<comment type="subunit">
    <text evidence="1">The RNAP catalytic core consists of 2 alpha, 1 beta, 1 beta' and 1 omega subunit. When a sigma factor is associated with the core the holoenzyme is formed, which can initiate transcription.</text>
</comment>
<comment type="similarity">
    <text evidence="1">Belongs to the RNA polymerase beta' chain family.</text>
</comment>
<reference key="1">
    <citation type="journal article" date="2008" name="Genome Res.">
        <title>Insights from the complete genome sequence of Mycobacterium marinum on the evolution of Mycobacterium tuberculosis.</title>
        <authorList>
            <person name="Stinear T.P."/>
            <person name="Seemann T."/>
            <person name="Harrison P.F."/>
            <person name="Jenkin G.A."/>
            <person name="Davies J.K."/>
            <person name="Johnson P.D."/>
            <person name="Abdellah Z."/>
            <person name="Arrowsmith C."/>
            <person name="Chillingworth T."/>
            <person name="Churcher C."/>
            <person name="Clarke K."/>
            <person name="Cronin A."/>
            <person name="Davis P."/>
            <person name="Goodhead I."/>
            <person name="Holroyd N."/>
            <person name="Jagels K."/>
            <person name="Lord A."/>
            <person name="Moule S."/>
            <person name="Mungall K."/>
            <person name="Norbertczak H."/>
            <person name="Quail M.A."/>
            <person name="Rabbinowitsch E."/>
            <person name="Walker D."/>
            <person name="White B."/>
            <person name="Whitehead S."/>
            <person name="Small P.L."/>
            <person name="Brosch R."/>
            <person name="Ramakrishnan L."/>
            <person name="Fischbach M.A."/>
            <person name="Parkhill J."/>
            <person name="Cole S.T."/>
        </authorList>
    </citation>
    <scope>NUCLEOTIDE SEQUENCE [LARGE SCALE GENOMIC DNA]</scope>
    <source>
        <strain>ATCC BAA-535 / M</strain>
    </source>
</reference>
<gene>
    <name evidence="1" type="primary">rpoC</name>
    <name type="ordered locus">MMAR_0996</name>
</gene>
<dbReference type="EC" id="2.7.7.6" evidence="1"/>
<dbReference type="EMBL" id="CP000854">
    <property type="protein sequence ID" value="ACC39452.1"/>
    <property type="molecule type" value="Genomic_DNA"/>
</dbReference>
<dbReference type="RefSeq" id="WP_012392907.1">
    <property type="nucleotide sequence ID" value="NC_010612.1"/>
</dbReference>
<dbReference type="SMR" id="B2HSJ4"/>
<dbReference type="STRING" id="216594.MMAR_0996"/>
<dbReference type="GeneID" id="34342596"/>
<dbReference type="KEGG" id="mmi:MMAR_0996"/>
<dbReference type="eggNOG" id="COG0086">
    <property type="taxonomic scope" value="Bacteria"/>
</dbReference>
<dbReference type="HOGENOM" id="CLU_000524_3_1_11"/>
<dbReference type="OrthoDB" id="9815296at2"/>
<dbReference type="Proteomes" id="UP000001190">
    <property type="component" value="Chromosome"/>
</dbReference>
<dbReference type="GO" id="GO:0000428">
    <property type="term" value="C:DNA-directed RNA polymerase complex"/>
    <property type="evidence" value="ECO:0007669"/>
    <property type="project" value="UniProtKB-KW"/>
</dbReference>
<dbReference type="GO" id="GO:0003677">
    <property type="term" value="F:DNA binding"/>
    <property type="evidence" value="ECO:0007669"/>
    <property type="project" value="UniProtKB-UniRule"/>
</dbReference>
<dbReference type="GO" id="GO:0003899">
    <property type="term" value="F:DNA-directed RNA polymerase activity"/>
    <property type="evidence" value="ECO:0007669"/>
    <property type="project" value="UniProtKB-UniRule"/>
</dbReference>
<dbReference type="GO" id="GO:0000287">
    <property type="term" value="F:magnesium ion binding"/>
    <property type="evidence" value="ECO:0007669"/>
    <property type="project" value="UniProtKB-UniRule"/>
</dbReference>
<dbReference type="GO" id="GO:0008270">
    <property type="term" value="F:zinc ion binding"/>
    <property type="evidence" value="ECO:0007669"/>
    <property type="project" value="UniProtKB-UniRule"/>
</dbReference>
<dbReference type="GO" id="GO:0006351">
    <property type="term" value="P:DNA-templated transcription"/>
    <property type="evidence" value="ECO:0007669"/>
    <property type="project" value="UniProtKB-UniRule"/>
</dbReference>
<dbReference type="CDD" id="cd02655">
    <property type="entry name" value="RNAP_beta'_C"/>
    <property type="match status" value="1"/>
</dbReference>
<dbReference type="CDD" id="cd01609">
    <property type="entry name" value="RNAP_beta'_N"/>
    <property type="match status" value="1"/>
</dbReference>
<dbReference type="FunFam" id="2.40.50.100:FF:000052">
    <property type="entry name" value="DNA-directed RNA polymerase subunit"/>
    <property type="match status" value="1"/>
</dbReference>
<dbReference type="FunFam" id="1.10.132.30:FF:000003">
    <property type="entry name" value="DNA-directed RNA polymerase subunit beta"/>
    <property type="match status" value="1"/>
</dbReference>
<dbReference type="FunFam" id="1.10.150.390:FF:000002">
    <property type="entry name" value="DNA-directed RNA polymerase subunit beta"/>
    <property type="match status" value="1"/>
</dbReference>
<dbReference type="FunFam" id="1.10.40.90:FF:000001">
    <property type="entry name" value="DNA-directed RNA polymerase subunit beta"/>
    <property type="match status" value="1"/>
</dbReference>
<dbReference type="FunFam" id="4.10.860.120:FF:000001">
    <property type="entry name" value="DNA-directed RNA polymerase subunit beta"/>
    <property type="match status" value="1"/>
</dbReference>
<dbReference type="Gene3D" id="1.10.132.30">
    <property type="match status" value="1"/>
</dbReference>
<dbReference type="Gene3D" id="1.10.150.390">
    <property type="match status" value="1"/>
</dbReference>
<dbReference type="Gene3D" id="1.10.1790.20">
    <property type="match status" value="1"/>
</dbReference>
<dbReference type="Gene3D" id="1.10.40.90">
    <property type="match status" value="1"/>
</dbReference>
<dbReference type="Gene3D" id="2.40.40.20">
    <property type="match status" value="1"/>
</dbReference>
<dbReference type="Gene3D" id="2.40.50.100">
    <property type="match status" value="1"/>
</dbReference>
<dbReference type="Gene3D" id="4.10.860.120">
    <property type="entry name" value="RNA polymerase II, clamp domain"/>
    <property type="match status" value="1"/>
</dbReference>
<dbReference type="Gene3D" id="1.10.274.100">
    <property type="entry name" value="RNA polymerase Rpb1, domain 3"/>
    <property type="match status" value="1"/>
</dbReference>
<dbReference type="HAMAP" id="MF_01322">
    <property type="entry name" value="RNApol_bact_RpoC"/>
    <property type="match status" value="1"/>
</dbReference>
<dbReference type="InterPro" id="IPR045867">
    <property type="entry name" value="DNA-dir_RpoC_beta_prime"/>
</dbReference>
<dbReference type="InterPro" id="IPR012754">
    <property type="entry name" value="DNA-dir_RpoC_beta_prime_bact"/>
</dbReference>
<dbReference type="InterPro" id="IPR000722">
    <property type="entry name" value="RNA_pol_asu"/>
</dbReference>
<dbReference type="InterPro" id="IPR006592">
    <property type="entry name" value="RNA_pol_N"/>
</dbReference>
<dbReference type="InterPro" id="IPR007080">
    <property type="entry name" value="RNA_pol_Rpb1_1"/>
</dbReference>
<dbReference type="InterPro" id="IPR007066">
    <property type="entry name" value="RNA_pol_Rpb1_3"/>
</dbReference>
<dbReference type="InterPro" id="IPR042102">
    <property type="entry name" value="RNA_pol_Rpb1_3_sf"/>
</dbReference>
<dbReference type="InterPro" id="IPR007083">
    <property type="entry name" value="RNA_pol_Rpb1_4"/>
</dbReference>
<dbReference type="InterPro" id="IPR007081">
    <property type="entry name" value="RNA_pol_Rpb1_5"/>
</dbReference>
<dbReference type="InterPro" id="IPR044893">
    <property type="entry name" value="RNA_pol_Rpb1_clamp_domain"/>
</dbReference>
<dbReference type="InterPro" id="IPR038120">
    <property type="entry name" value="Rpb1_funnel_sf"/>
</dbReference>
<dbReference type="NCBIfam" id="NF011498">
    <property type="entry name" value="PRK14906.1"/>
    <property type="match status" value="1"/>
</dbReference>
<dbReference type="NCBIfam" id="TIGR02386">
    <property type="entry name" value="rpoC_TIGR"/>
    <property type="match status" value="1"/>
</dbReference>
<dbReference type="PANTHER" id="PTHR19376">
    <property type="entry name" value="DNA-DIRECTED RNA POLYMERASE"/>
    <property type="match status" value="1"/>
</dbReference>
<dbReference type="PANTHER" id="PTHR19376:SF54">
    <property type="entry name" value="DNA-DIRECTED RNA POLYMERASE SUBUNIT BETA"/>
    <property type="match status" value="1"/>
</dbReference>
<dbReference type="Pfam" id="PF04997">
    <property type="entry name" value="RNA_pol_Rpb1_1"/>
    <property type="match status" value="1"/>
</dbReference>
<dbReference type="Pfam" id="PF00623">
    <property type="entry name" value="RNA_pol_Rpb1_2"/>
    <property type="match status" value="1"/>
</dbReference>
<dbReference type="Pfam" id="PF04983">
    <property type="entry name" value="RNA_pol_Rpb1_3"/>
    <property type="match status" value="1"/>
</dbReference>
<dbReference type="Pfam" id="PF05000">
    <property type="entry name" value="RNA_pol_Rpb1_4"/>
    <property type="match status" value="1"/>
</dbReference>
<dbReference type="Pfam" id="PF04998">
    <property type="entry name" value="RNA_pol_Rpb1_5"/>
    <property type="match status" value="1"/>
</dbReference>
<dbReference type="SMART" id="SM00663">
    <property type="entry name" value="RPOLA_N"/>
    <property type="match status" value="1"/>
</dbReference>
<dbReference type="SUPFAM" id="SSF64484">
    <property type="entry name" value="beta and beta-prime subunits of DNA dependent RNA-polymerase"/>
    <property type="match status" value="1"/>
</dbReference>